<accession>Q5PQJ7</accession>
<dbReference type="EMBL" id="BC087163">
    <property type="protein sequence ID" value="AAH87163.1"/>
    <property type="molecule type" value="mRNA"/>
</dbReference>
<dbReference type="RefSeq" id="NP_001014111.1">
    <property type="nucleotide sequence ID" value="NM_001014089.2"/>
</dbReference>
<dbReference type="SMR" id="Q5PQJ7"/>
<dbReference type="FunCoup" id="Q5PQJ7">
    <property type="interactions" value="2667"/>
</dbReference>
<dbReference type="STRING" id="10116.ENSRNOP00000056698"/>
<dbReference type="iPTMnet" id="Q5PQJ7"/>
<dbReference type="PhosphoSitePlus" id="Q5PQJ7"/>
<dbReference type="jPOST" id="Q5PQJ7"/>
<dbReference type="PaxDb" id="10116-ENSRNOP00000056698"/>
<dbReference type="GeneID" id="315591"/>
<dbReference type="KEGG" id="rno:315591"/>
<dbReference type="UCSC" id="RGD:1308880">
    <property type="organism name" value="rat"/>
</dbReference>
<dbReference type="AGR" id="RGD:1308880"/>
<dbReference type="CTD" id="219899"/>
<dbReference type="RGD" id="1308880">
    <property type="gene designation" value="Tbcel"/>
</dbReference>
<dbReference type="VEuPathDB" id="HostDB:ENSRNOG00000032364"/>
<dbReference type="eggNOG" id="KOG2982">
    <property type="taxonomic scope" value="Eukaryota"/>
</dbReference>
<dbReference type="HOGENOM" id="CLU_017716_1_1_1"/>
<dbReference type="InParanoid" id="Q5PQJ7"/>
<dbReference type="PhylomeDB" id="Q5PQJ7"/>
<dbReference type="PRO" id="PR:Q5PQJ7"/>
<dbReference type="Proteomes" id="UP000002494">
    <property type="component" value="Chromosome 8"/>
</dbReference>
<dbReference type="Bgee" id="ENSRNOG00000032364">
    <property type="expression patterns" value="Expressed in testis and 18 other cell types or tissues"/>
</dbReference>
<dbReference type="GO" id="GO:0005737">
    <property type="term" value="C:cytoplasm"/>
    <property type="evidence" value="ECO:0000318"/>
    <property type="project" value="GO_Central"/>
</dbReference>
<dbReference type="GO" id="GO:0005856">
    <property type="term" value="C:cytoskeleton"/>
    <property type="evidence" value="ECO:0007669"/>
    <property type="project" value="UniProtKB-SubCell"/>
</dbReference>
<dbReference type="GO" id="GO:0043014">
    <property type="term" value="F:alpha-tubulin binding"/>
    <property type="evidence" value="ECO:0000318"/>
    <property type="project" value="GO_Central"/>
</dbReference>
<dbReference type="GO" id="GO:0000226">
    <property type="term" value="P:microtubule cytoskeleton organization"/>
    <property type="evidence" value="ECO:0000318"/>
    <property type="project" value="GO_Central"/>
</dbReference>
<dbReference type="GO" id="GO:0007023">
    <property type="term" value="P:post-chaperonin tubulin folding pathway"/>
    <property type="evidence" value="ECO:0000318"/>
    <property type="project" value="GO_Central"/>
</dbReference>
<dbReference type="GO" id="GO:0007021">
    <property type="term" value="P:tubulin complex assembly"/>
    <property type="evidence" value="ECO:0000318"/>
    <property type="project" value="GO_Central"/>
</dbReference>
<dbReference type="CDD" id="cd17045">
    <property type="entry name" value="Ubl_TBCEL"/>
    <property type="match status" value="1"/>
</dbReference>
<dbReference type="FunFam" id="3.80.10.10:FF:000295">
    <property type="entry name" value="Tubulin-specific chaperone cofactor E-like"/>
    <property type="match status" value="1"/>
</dbReference>
<dbReference type="FunFam" id="3.80.10.10:FF:000304">
    <property type="entry name" value="Tubulin-specific chaperone cofactor E-like"/>
    <property type="match status" value="1"/>
</dbReference>
<dbReference type="FunFam" id="3.80.10.10:FF:000104">
    <property type="entry name" value="Tubulin-specific chaperone cofactor E-like protein"/>
    <property type="match status" value="1"/>
</dbReference>
<dbReference type="FunFam" id="3.10.20.90:FF:000115">
    <property type="entry name" value="tubulin-specific chaperone cofactor E-like protein"/>
    <property type="match status" value="1"/>
</dbReference>
<dbReference type="Gene3D" id="3.10.20.90">
    <property type="entry name" value="Phosphatidylinositol 3-kinase Catalytic Subunit, Chain A, domain 1"/>
    <property type="match status" value="1"/>
</dbReference>
<dbReference type="Gene3D" id="3.80.10.10">
    <property type="entry name" value="Ribonuclease Inhibitor"/>
    <property type="match status" value="2"/>
</dbReference>
<dbReference type="InterPro" id="IPR032675">
    <property type="entry name" value="LRR_dom_sf"/>
</dbReference>
<dbReference type="InterPro" id="IPR047991">
    <property type="entry name" value="TBCEL_Ubl"/>
</dbReference>
<dbReference type="InterPro" id="IPR000626">
    <property type="entry name" value="Ubiquitin-like_dom"/>
</dbReference>
<dbReference type="InterPro" id="IPR029071">
    <property type="entry name" value="Ubiquitin-like_domsf"/>
</dbReference>
<dbReference type="PANTHER" id="PTHR46545">
    <property type="entry name" value="LEUCINE-RICH REPEAT-CONTAINING PROTEIN 51"/>
    <property type="match status" value="1"/>
</dbReference>
<dbReference type="PANTHER" id="PTHR46545:SF1">
    <property type="entry name" value="LEUCINE-RICH REPEAT-CONTAINING PROTEIN 51"/>
    <property type="match status" value="1"/>
</dbReference>
<dbReference type="Pfam" id="PF14580">
    <property type="entry name" value="LRR_9"/>
    <property type="match status" value="1"/>
</dbReference>
<dbReference type="Pfam" id="PF14560">
    <property type="entry name" value="Ubiquitin_2"/>
    <property type="match status" value="1"/>
</dbReference>
<dbReference type="SUPFAM" id="SSF52058">
    <property type="entry name" value="L domain-like"/>
    <property type="match status" value="1"/>
</dbReference>
<dbReference type="SUPFAM" id="SSF54236">
    <property type="entry name" value="Ubiquitin-like"/>
    <property type="match status" value="1"/>
</dbReference>
<dbReference type="PROSITE" id="PS50053">
    <property type="entry name" value="UBIQUITIN_2"/>
    <property type="match status" value="1"/>
</dbReference>
<organism>
    <name type="scientific">Rattus norvegicus</name>
    <name type="common">Rat</name>
    <dbReference type="NCBI Taxonomy" id="10116"/>
    <lineage>
        <taxon>Eukaryota</taxon>
        <taxon>Metazoa</taxon>
        <taxon>Chordata</taxon>
        <taxon>Craniata</taxon>
        <taxon>Vertebrata</taxon>
        <taxon>Euteleostomi</taxon>
        <taxon>Mammalia</taxon>
        <taxon>Eutheria</taxon>
        <taxon>Euarchontoglires</taxon>
        <taxon>Glires</taxon>
        <taxon>Rodentia</taxon>
        <taxon>Myomorpha</taxon>
        <taxon>Muroidea</taxon>
        <taxon>Muridae</taxon>
        <taxon>Murinae</taxon>
        <taxon>Rattus</taxon>
    </lineage>
</organism>
<keyword id="KW-0175">Coiled coil</keyword>
<keyword id="KW-0963">Cytoplasm</keyword>
<keyword id="KW-0206">Cytoskeleton</keyword>
<keyword id="KW-0433">Leucine-rich repeat</keyword>
<keyword id="KW-0597">Phosphoprotein</keyword>
<keyword id="KW-1185">Reference proteome</keyword>
<keyword id="KW-0677">Repeat</keyword>
<evidence type="ECO:0000250" key="1"/>
<evidence type="ECO:0000250" key="2">
    <source>
        <dbReference type="UniProtKB" id="Q5QJ74"/>
    </source>
</evidence>
<evidence type="ECO:0000255" key="3"/>
<evidence type="ECO:0000255" key="4">
    <source>
        <dbReference type="PROSITE-ProRule" id="PRU00214"/>
    </source>
</evidence>
<evidence type="ECO:0000305" key="5"/>
<evidence type="ECO:0007744" key="6">
    <source>
    </source>
</evidence>
<sequence>MDQPSGRSFMQVLCEKYSPENFPYRRGPGMGVHVPATPQGSPMKDRLNLPSVLVLNSCGITCAGDEREIAAFCAHVSELDLSDNKLQDWHEVSKIVSNVPQLEFLNLSSNPLSLSVLERTCAGSFSGVRKLVLNNSKASWETVHTILQELPDLEELFLCLNDYETVSCPSVCCHSLKLLHITDNNLQEWTEIRKLGVMFPSLDTLVLANNHVNAIEEPADSLARLFPNLRSISLHKSGLQSWEDIDKLNSFPKLEEVRLLGIPLLQPYTTEERRKLVVARLPSVSKLNGSVVTDGEREDSERFFIRYYVDVPQEEVPFRYHELITKYGKLEPLAEVDLRPQSSAKVEVHFNDQVEEVSIRLDQTVAELKRQLKTLVQLPTSSMLLYYFDHEAPFGPEEMKYSSRALHSFGIRDGDKIFVESKTK</sequence>
<reference key="1">
    <citation type="journal article" date="2004" name="Genome Res.">
        <title>The status, quality, and expansion of the NIH full-length cDNA project: the Mammalian Gene Collection (MGC).</title>
        <authorList>
            <consortium name="The MGC Project Team"/>
        </authorList>
    </citation>
    <scope>NUCLEOTIDE SEQUENCE [LARGE SCALE MRNA]</scope>
    <source>
        <tissue>Testis</tissue>
    </source>
</reference>
<reference key="2">
    <citation type="journal article" date="2012" name="Nat. Commun.">
        <title>Quantitative maps of protein phosphorylation sites across 14 different rat organs and tissues.</title>
        <authorList>
            <person name="Lundby A."/>
            <person name="Secher A."/>
            <person name="Lage K."/>
            <person name="Nordsborg N.B."/>
            <person name="Dmytriyev A."/>
            <person name="Lundby C."/>
            <person name="Olsen J.V."/>
        </authorList>
    </citation>
    <scope>PHOSPHORYLATION [LARGE SCALE ANALYSIS] AT SER-18</scope>
    <scope>IDENTIFICATION BY MASS SPECTROMETRY [LARGE SCALE ANALYSIS]</scope>
</reference>
<name>TBCEL_RAT</name>
<comment type="function">
    <text evidence="1">Acts as a regulator of tubulin stability.</text>
</comment>
<comment type="subcellular location">
    <subcellularLocation>
        <location evidence="5">Cytoplasm</location>
        <location evidence="5">Cytoskeleton</location>
    </subcellularLocation>
</comment>
<proteinExistence type="evidence at protein level"/>
<feature type="chain" id="PRO_0000239670" description="Tubulin-specific chaperone cofactor E-like protein">
    <location>
        <begin position="1"/>
        <end position="424"/>
    </location>
</feature>
<feature type="repeat" description="LRR 1">
    <location>
        <begin position="73"/>
        <end position="98"/>
    </location>
</feature>
<feature type="repeat" description="LRR 2">
    <location>
        <begin position="99"/>
        <end position="123"/>
    </location>
</feature>
<feature type="repeat" description="LRR 3">
    <location>
        <begin position="124"/>
        <end position="147"/>
    </location>
</feature>
<feature type="repeat" description="LRR 4">
    <location>
        <begin position="150"/>
        <end position="172"/>
    </location>
</feature>
<feature type="repeat" description="LRR 5">
    <location>
        <begin position="173"/>
        <end position="197"/>
    </location>
</feature>
<feature type="repeat" description="LRR 6">
    <location>
        <begin position="199"/>
        <end position="224"/>
    </location>
</feature>
<feature type="repeat" description="LRR 7">
    <location>
        <begin position="226"/>
        <end position="250"/>
    </location>
</feature>
<feature type="domain" description="LRRCT">
    <location>
        <begin position="262"/>
        <end position="303"/>
    </location>
</feature>
<feature type="domain" description="Ubiquitin-like" evidence="4">
    <location>
        <begin position="334"/>
        <end position="424"/>
    </location>
</feature>
<feature type="coiled-coil region" evidence="3">
    <location>
        <begin position="350"/>
        <end position="375"/>
    </location>
</feature>
<feature type="modified residue" description="Phosphoserine" evidence="6">
    <location>
        <position position="18"/>
    </location>
</feature>
<feature type="modified residue" description="Phosphoserine" evidence="2">
    <location>
        <position position="41"/>
    </location>
</feature>
<protein>
    <recommendedName>
        <fullName>Tubulin-specific chaperone cofactor E-like protein</fullName>
    </recommendedName>
    <alternativeName>
        <fullName>Leucine-rich repeat-containing protein 35</fullName>
    </alternativeName>
</protein>
<gene>
    <name type="primary">Tbcel</name>
    <name type="synonym">Lrrc35</name>
</gene>